<proteinExistence type="inferred from homology"/>
<comment type="function">
    <text evidence="1">Catalyzes the oxidation of 3-carboxy-2-hydroxy-4-methylpentanoate (3-isopropylmalate) to 3-carboxy-4-methyl-2-oxopentanoate. The product decarboxylates to 4-methyl-2 oxopentanoate.</text>
</comment>
<comment type="catalytic activity">
    <reaction evidence="1">
        <text>(2R,3S)-3-isopropylmalate + NAD(+) = 4-methyl-2-oxopentanoate + CO2 + NADH</text>
        <dbReference type="Rhea" id="RHEA:32271"/>
        <dbReference type="ChEBI" id="CHEBI:16526"/>
        <dbReference type="ChEBI" id="CHEBI:17865"/>
        <dbReference type="ChEBI" id="CHEBI:35121"/>
        <dbReference type="ChEBI" id="CHEBI:57540"/>
        <dbReference type="ChEBI" id="CHEBI:57945"/>
        <dbReference type="EC" id="1.1.1.85"/>
    </reaction>
</comment>
<comment type="cofactor">
    <cofactor evidence="1">
        <name>Mg(2+)</name>
        <dbReference type="ChEBI" id="CHEBI:18420"/>
    </cofactor>
    <cofactor evidence="1">
        <name>Mn(2+)</name>
        <dbReference type="ChEBI" id="CHEBI:29035"/>
    </cofactor>
    <text evidence="1">Binds 1 Mg(2+) or Mn(2+) ion per subunit.</text>
</comment>
<comment type="pathway">
    <text evidence="1">Amino-acid biosynthesis; L-leucine biosynthesis; L-leucine from 3-methyl-2-oxobutanoate: step 3/4.</text>
</comment>
<comment type="subunit">
    <text evidence="1">Homodimer.</text>
</comment>
<comment type="subcellular location">
    <subcellularLocation>
        <location evidence="1">Cytoplasm</location>
    </subcellularLocation>
</comment>
<comment type="similarity">
    <text evidence="1">Belongs to the isocitrate and isopropylmalate dehydrogenases family. LeuB type 2 subfamily.</text>
</comment>
<gene>
    <name evidence="1" type="primary">leuB</name>
    <name type="ordered locus">SAV_2718</name>
</gene>
<protein>
    <recommendedName>
        <fullName evidence="1">3-isopropylmalate dehydrogenase</fullName>
        <ecNumber evidence="1">1.1.1.85</ecNumber>
    </recommendedName>
    <alternativeName>
        <fullName evidence="1">3-IPM-DH</fullName>
    </alternativeName>
    <alternativeName>
        <fullName evidence="1">Beta-IPM dehydrogenase</fullName>
        <shortName evidence="1">IMDH</shortName>
    </alternativeName>
</protein>
<reference key="1">
    <citation type="journal article" date="2001" name="Proc. Natl. Acad. Sci. U.S.A.">
        <title>Genome sequence of an industrial microorganism Streptomyces avermitilis: deducing the ability of producing secondary metabolites.</title>
        <authorList>
            <person name="Omura S."/>
            <person name="Ikeda H."/>
            <person name="Ishikawa J."/>
            <person name="Hanamoto A."/>
            <person name="Takahashi C."/>
            <person name="Shinose M."/>
            <person name="Takahashi Y."/>
            <person name="Horikawa H."/>
            <person name="Nakazawa H."/>
            <person name="Osonoe T."/>
            <person name="Kikuchi H."/>
            <person name="Shiba T."/>
            <person name="Sakaki Y."/>
            <person name="Hattori M."/>
        </authorList>
    </citation>
    <scope>NUCLEOTIDE SEQUENCE [LARGE SCALE GENOMIC DNA]</scope>
    <source>
        <strain>ATCC 31267 / DSM 46492 / JCM 5070 / NBRC 14893 / NCIMB 12804 / NRRL 8165 / MA-4680</strain>
    </source>
</reference>
<reference key="2">
    <citation type="journal article" date="2003" name="Nat. Biotechnol.">
        <title>Complete genome sequence and comparative analysis of the industrial microorganism Streptomyces avermitilis.</title>
        <authorList>
            <person name="Ikeda H."/>
            <person name="Ishikawa J."/>
            <person name="Hanamoto A."/>
            <person name="Shinose M."/>
            <person name="Kikuchi H."/>
            <person name="Shiba T."/>
            <person name="Sakaki Y."/>
            <person name="Hattori M."/>
            <person name="Omura S."/>
        </authorList>
    </citation>
    <scope>NUCLEOTIDE SEQUENCE [LARGE SCALE GENOMIC DNA]</scope>
    <source>
        <strain>ATCC 31267 / DSM 46492 / JCM 5070 / NBRC 14893 / NCIMB 12804 / NRRL 8165 / MA-4680</strain>
    </source>
</reference>
<organism>
    <name type="scientific">Streptomyces avermitilis (strain ATCC 31267 / DSM 46492 / JCM 5070 / NBRC 14893 / NCIMB 12804 / NRRL 8165 / MA-4680)</name>
    <dbReference type="NCBI Taxonomy" id="227882"/>
    <lineage>
        <taxon>Bacteria</taxon>
        <taxon>Bacillati</taxon>
        <taxon>Actinomycetota</taxon>
        <taxon>Actinomycetes</taxon>
        <taxon>Kitasatosporales</taxon>
        <taxon>Streptomycetaceae</taxon>
        <taxon>Streptomyces</taxon>
    </lineage>
</organism>
<keyword id="KW-0028">Amino-acid biosynthesis</keyword>
<keyword id="KW-0100">Branched-chain amino acid biosynthesis</keyword>
<keyword id="KW-0963">Cytoplasm</keyword>
<keyword id="KW-0432">Leucine biosynthesis</keyword>
<keyword id="KW-0460">Magnesium</keyword>
<keyword id="KW-0464">Manganese</keyword>
<keyword id="KW-0479">Metal-binding</keyword>
<keyword id="KW-0520">NAD</keyword>
<keyword id="KW-0560">Oxidoreductase</keyword>
<keyword id="KW-1185">Reference proteome</keyword>
<accession>Q82JN6</accession>
<feature type="chain" id="PRO_0000083805" description="3-isopropylmalate dehydrogenase">
    <location>
        <begin position="1"/>
        <end position="347"/>
    </location>
</feature>
<feature type="binding site" evidence="1">
    <location>
        <position position="94"/>
    </location>
    <ligand>
        <name>substrate</name>
    </ligand>
</feature>
<feature type="binding site" evidence="1">
    <location>
        <position position="104"/>
    </location>
    <ligand>
        <name>substrate</name>
    </ligand>
</feature>
<feature type="binding site" evidence="1">
    <location>
        <position position="128"/>
    </location>
    <ligand>
        <name>substrate</name>
    </ligand>
</feature>
<feature type="binding site" evidence="1">
    <location>
        <position position="219"/>
    </location>
    <ligand>
        <name>Mg(2+)</name>
        <dbReference type="ChEBI" id="CHEBI:18420"/>
    </ligand>
</feature>
<feature type="binding site" evidence="1">
    <location>
        <position position="219"/>
    </location>
    <ligand>
        <name>substrate</name>
    </ligand>
</feature>
<feature type="binding site" evidence="1">
    <location>
        <position position="243"/>
    </location>
    <ligand>
        <name>Mg(2+)</name>
        <dbReference type="ChEBI" id="CHEBI:18420"/>
    </ligand>
</feature>
<feature type="binding site" evidence="1">
    <location>
        <position position="247"/>
    </location>
    <ligand>
        <name>Mg(2+)</name>
        <dbReference type="ChEBI" id="CHEBI:18420"/>
    </ligand>
</feature>
<feature type="binding site" evidence="1">
    <location>
        <begin position="279"/>
        <end position="291"/>
    </location>
    <ligand>
        <name>NAD(+)</name>
        <dbReference type="ChEBI" id="CHEBI:57540"/>
    </ligand>
</feature>
<feature type="site" description="Important for catalysis" evidence="1">
    <location>
        <position position="135"/>
    </location>
</feature>
<feature type="site" description="Important for catalysis" evidence="1">
    <location>
        <position position="186"/>
    </location>
</feature>
<dbReference type="EC" id="1.1.1.85" evidence="1"/>
<dbReference type="EMBL" id="BA000030">
    <property type="protein sequence ID" value="BAC70429.1"/>
    <property type="molecule type" value="Genomic_DNA"/>
</dbReference>
<dbReference type="RefSeq" id="WP_010984150.1">
    <property type="nucleotide sequence ID" value="NZ_JZJK01000071.1"/>
</dbReference>
<dbReference type="SMR" id="Q82JN6"/>
<dbReference type="GeneID" id="41539807"/>
<dbReference type="KEGG" id="sma:SAVERM_2718"/>
<dbReference type="eggNOG" id="COG0473">
    <property type="taxonomic scope" value="Bacteria"/>
</dbReference>
<dbReference type="HOGENOM" id="CLU_031953_0_1_11"/>
<dbReference type="OrthoDB" id="5289857at2"/>
<dbReference type="UniPathway" id="UPA00048">
    <property type="reaction ID" value="UER00072"/>
</dbReference>
<dbReference type="Proteomes" id="UP000000428">
    <property type="component" value="Chromosome"/>
</dbReference>
<dbReference type="GO" id="GO:0005737">
    <property type="term" value="C:cytoplasm"/>
    <property type="evidence" value="ECO:0007669"/>
    <property type="project" value="UniProtKB-SubCell"/>
</dbReference>
<dbReference type="GO" id="GO:0003862">
    <property type="term" value="F:3-isopropylmalate dehydrogenase activity"/>
    <property type="evidence" value="ECO:0007669"/>
    <property type="project" value="UniProtKB-UniRule"/>
</dbReference>
<dbReference type="GO" id="GO:0000287">
    <property type="term" value="F:magnesium ion binding"/>
    <property type="evidence" value="ECO:0007669"/>
    <property type="project" value="InterPro"/>
</dbReference>
<dbReference type="GO" id="GO:0051287">
    <property type="term" value="F:NAD binding"/>
    <property type="evidence" value="ECO:0007669"/>
    <property type="project" value="InterPro"/>
</dbReference>
<dbReference type="GO" id="GO:0009098">
    <property type="term" value="P:L-leucine biosynthetic process"/>
    <property type="evidence" value="ECO:0007669"/>
    <property type="project" value="UniProtKB-UniRule"/>
</dbReference>
<dbReference type="Gene3D" id="3.40.718.10">
    <property type="entry name" value="Isopropylmalate Dehydrogenase"/>
    <property type="match status" value="1"/>
</dbReference>
<dbReference type="HAMAP" id="MF_01035">
    <property type="entry name" value="LeuB_type2"/>
    <property type="match status" value="1"/>
</dbReference>
<dbReference type="InterPro" id="IPR050501">
    <property type="entry name" value="ICDH/IPMDH"/>
</dbReference>
<dbReference type="InterPro" id="IPR019818">
    <property type="entry name" value="IsoCit/isopropylmalate_DH_CS"/>
</dbReference>
<dbReference type="InterPro" id="IPR024084">
    <property type="entry name" value="IsoPropMal-DH-like_dom"/>
</dbReference>
<dbReference type="InterPro" id="IPR023698">
    <property type="entry name" value="LeuB_actb"/>
</dbReference>
<dbReference type="NCBIfam" id="NF002898">
    <property type="entry name" value="PRK03437.1"/>
    <property type="match status" value="1"/>
</dbReference>
<dbReference type="PANTHER" id="PTHR43275">
    <property type="entry name" value="D-MALATE DEHYDROGENASE [DECARBOXYLATING]"/>
    <property type="match status" value="1"/>
</dbReference>
<dbReference type="PANTHER" id="PTHR43275:SF1">
    <property type="entry name" value="D-MALATE DEHYDROGENASE [DECARBOXYLATING]"/>
    <property type="match status" value="1"/>
</dbReference>
<dbReference type="Pfam" id="PF00180">
    <property type="entry name" value="Iso_dh"/>
    <property type="match status" value="1"/>
</dbReference>
<dbReference type="SMART" id="SM01329">
    <property type="entry name" value="Iso_dh"/>
    <property type="match status" value="1"/>
</dbReference>
<dbReference type="SUPFAM" id="SSF53659">
    <property type="entry name" value="Isocitrate/Isopropylmalate dehydrogenase-like"/>
    <property type="match status" value="1"/>
</dbReference>
<dbReference type="PROSITE" id="PS00470">
    <property type="entry name" value="IDH_IMDH"/>
    <property type="match status" value="1"/>
</dbReference>
<evidence type="ECO:0000255" key="1">
    <source>
        <dbReference type="HAMAP-Rule" id="MF_01035"/>
    </source>
</evidence>
<sequence>MARSINLAVIPGDGIGQEVVAQGLKVLSAALPSDVKLETKEFDFGARRYHATGETLTDADLDALKQHDAILLGAIGDPSVPSGVLERGFLLKLRFAFDHHVNLRPSKLLPGVETPLAGQPEIDFVVVREGTEGPYTGNGGTIRTGTPHAVATEVSLNTAFGIERVVRDAYARAQARPRKKLALVHKNNVLVHAGHLWTDIFNKVGEEFPDVTTEYMHVDAATIYLVTQPERFDVIVTDNLFGDIITDLAAAISGGIGVAASGNINPSGAYPSMFEPVHGSAPDIAGQGKADPSATILSVALLLRHLGYEAEAARIEEAVSADLAERVGKPARSTDEIGDALTVRVAG</sequence>
<name>LEU3_STRAW</name>